<keyword id="KW-0349">Heme</keyword>
<keyword id="KW-0376">Hydrogen peroxide</keyword>
<keyword id="KW-0408">Iron</keyword>
<keyword id="KW-0479">Metal-binding</keyword>
<keyword id="KW-0560">Oxidoreductase</keyword>
<keyword id="KW-0575">Peroxidase</keyword>
<comment type="function">
    <text evidence="1">Bifunctional enzyme with both catalase and broad-spectrum peroxidase activity.</text>
</comment>
<comment type="catalytic activity">
    <reaction evidence="1">
        <text>H2O2 + AH2 = A + 2 H2O</text>
        <dbReference type="Rhea" id="RHEA:30275"/>
        <dbReference type="ChEBI" id="CHEBI:13193"/>
        <dbReference type="ChEBI" id="CHEBI:15377"/>
        <dbReference type="ChEBI" id="CHEBI:16240"/>
        <dbReference type="ChEBI" id="CHEBI:17499"/>
        <dbReference type="EC" id="1.11.1.21"/>
    </reaction>
</comment>
<comment type="catalytic activity">
    <reaction evidence="1">
        <text>2 H2O2 = O2 + 2 H2O</text>
        <dbReference type="Rhea" id="RHEA:20309"/>
        <dbReference type="ChEBI" id="CHEBI:15377"/>
        <dbReference type="ChEBI" id="CHEBI:15379"/>
        <dbReference type="ChEBI" id="CHEBI:16240"/>
        <dbReference type="EC" id="1.11.1.21"/>
    </reaction>
</comment>
<comment type="cofactor">
    <cofactor evidence="1">
        <name>heme b</name>
        <dbReference type="ChEBI" id="CHEBI:60344"/>
    </cofactor>
    <text evidence="1">Binds 1 heme b (iron(II)-protoporphyrin IX) group per dimer.</text>
</comment>
<comment type="subunit">
    <text evidence="1">Homodimer or homotetramer.</text>
</comment>
<comment type="PTM">
    <text evidence="1">Formation of the three residue Trp-Tyr-Met cross-link is important for the catalase, but not the peroxidase activity of the enzyme.</text>
</comment>
<comment type="similarity">
    <text evidence="1">Belongs to the peroxidase family. Peroxidase/catalase subfamily.</text>
</comment>
<evidence type="ECO:0000255" key="1">
    <source>
        <dbReference type="HAMAP-Rule" id="MF_01961"/>
    </source>
</evidence>
<evidence type="ECO:0000256" key="2">
    <source>
        <dbReference type="SAM" id="MobiDB-lite"/>
    </source>
</evidence>
<reference key="1">
    <citation type="submission" date="2007-04" db="EMBL/GenBank/DDBJ databases">
        <title>Complete sequence of chromosome of Mycobacterium gilvum PYR-GCK.</title>
        <authorList>
            <consortium name="US DOE Joint Genome Institute"/>
            <person name="Copeland A."/>
            <person name="Lucas S."/>
            <person name="Lapidus A."/>
            <person name="Barry K."/>
            <person name="Detter J.C."/>
            <person name="Glavina del Rio T."/>
            <person name="Hammon N."/>
            <person name="Israni S."/>
            <person name="Dalin E."/>
            <person name="Tice H."/>
            <person name="Pitluck S."/>
            <person name="Chain P."/>
            <person name="Malfatti S."/>
            <person name="Shin M."/>
            <person name="Vergez L."/>
            <person name="Schmutz J."/>
            <person name="Larimer F."/>
            <person name="Land M."/>
            <person name="Hauser L."/>
            <person name="Kyrpides N."/>
            <person name="Mikhailova N."/>
            <person name="Miller C."/>
            <person name="Richardson P."/>
        </authorList>
    </citation>
    <scope>NUCLEOTIDE SEQUENCE [LARGE SCALE GENOMIC DNA]</scope>
    <source>
        <strain>PYR-GCK</strain>
    </source>
</reference>
<dbReference type="EC" id="1.11.1.21" evidence="1"/>
<dbReference type="EMBL" id="CP000656">
    <property type="protein sequence ID" value="ABP45926.1"/>
    <property type="molecule type" value="Genomic_DNA"/>
</dbReference>
<dbReference type="SMR" id="A4TA35"/>
<dbReference type="STRING" id="350054.Mflv_3451"/>
<dbReference type="PeroxiBase" id="3622">
    <property type="entry name" value="MgiCP01_PYR-GCK"/>
</dbReference>
<dbReference type="KEGG" id="mgi:Mflv_3451"/>
<dbReference type="eggNOG" id="COG0376">
    <property type="taxonomic scope" value="Bacteria"/>
</dbReference>
<dbReference type="HOGENOM" id="CLU_025424_2_0_11"/>
<dbReference type="OrthoDB" id="9759743at2"/>
<dbReference type="GO" id="GO:0005829">
    <property type="term" value="C:cytosol"/>
    <property type="evidence" value="ECO:0007669"/>
    <property type="project" value="TreeGrafter"/>
</dbReference>
<dbReference type="GO" id="GO:0004096">
    <property type="term" value="F:catalase activity"/>
    <property type="evidence" value="ECO:0007669"/>
    <property type="project" value="UniProtKB-UniRule"/>
</dbReference>
<dbReference type="GO" id="GO:0020037">
    <property type="term" value="F:heme binding"/>
    <property type="evidence" value="ECO:0007669"/>
    <property type="project" value="InterPro"/>
</dbReference>
<dbReference type="GO" id="GO:0046872">
    <property type="term" value="F:metal ion binding"/>
    <property type="evidence" value="ECO:0007669"/>
    <property type="project" value="UniProtKB-KW"/>
</dbReference>
<dbReference type="GO" id="GO:0070301">
    <property type="term" value="P:cellular response to hydrogen peroxide"/>
    <property type="evidence" value="ECO:0007669"/>
    <property type="project" value="TreeGrafter"/>
</dbReference>
<dbReference type="GO" id="GO:0042744">
    <property type="term" value="P:hydrogen peroxide catabolic process"/>
    <property type="evidence" value="ECO:0007669"/>
    <property type="project" value="UniProtKB-KW"/>
</dbReference>
<dbReference type="CDD" id="cd08200">
    <property type="entry name" value="catalase_peroxidase_2"/>
    <property type="match status" value="1"/>
</dbReference>
<dbReference type="FunFam" id="1.10.420.10:FF:000004">
    <property type="entry name" value="Catalase-peroxidase"/>
    <property type="match status" value="1"/>
</dbReference>
<dbReference type="FunFam" id="1.10.520.10:FF:000002">
    <property type="entry name" value="Catalase-peroxidase"/>
    <property type="match status" value="1"/>
</dbReference>
<dbReference type="Gene3D" id="1.10.520.10">
    <property type="match status" value="2"/>
</dbReference>
<dbReference type="Gene3D" id="1.10.420.10">
    <property type="entry name" value="Peroxidase, domain 2"/>
    <property type="match status" value="2"/>
</dbReference>
<dbReference type="HAMAP" id="MF_01961">
    <property type="entry name" value="Catal_peroxid"/>
    <property type="match status" value="1"/>
</dbReference>
<dbReference type="InterPro" id="IPR000763">
    <property type="entry name" value="Catalase_peroxidase"/>
</dbReference>
<dbReference type="InterPro" id="IPR002016">
    <property type="entry name" value="Haem_peroxidase"/>
</dbReference>
<dbReference type="InterPro" id="IPR010255">
    <property type="entry name" value="Haem_peroxidase_sf"/>
</dbReference>
<dbReference type="InterPro" id="IPR019794">
    <property type="entry name" value="Peroxidases_AS"/>
</dbReference>
<dbReference type="InterPro" id="IPR019793">
    <property type="entry name" value="Peroxidases_heam-ligand_BS"/>
</dbReference>
<dbReference type="NCBIfam" id="TIGR00198">
    <property type="entry name" value="cat_per_HPI"/>
    <property type="match status" value="1"/>
</dbReference>
<dbReference type="NCBIfam" id="NF011635">
    <property type="entry name" value="PRK15061.1"/>
    <property type="match status" value="1"/>
</dbReference>
<dbReference type="PANTHER" id="PTHR30555:SF0">
    <property type="entry name" value="CATALASE-PEROXIDASE"/>
    <property type="match status" value="1"/>
</dbReference>
<dbReference type="PANTHER" id="PTHR30555">
    <property type="entry name" value="HYDROPEROXIDASE I, BIFUNCTIONAL CATALASE-PEROXIDASE"/>
    <property type="match status" value="1"/>
</dbReference>
<dbReference type="Pfam" id="PF00141">
    <property type="entry name" value="peroxidase"/>
    <property type="match status" value="2"/>
</dbReference>
<dbReference type="PRINTS" id="PR00460">
    <property type="entry name" value="BPEROXIDASE"/>
</dbReference>
<dbReference type="PRINTS" id="PR00458">
    <property type="entry name" value="PEROXIDASE"/>
</dbReference>
<dbReference type="SUPFAM" id="SSF48113">
    <property type="entry name" value="Heme-dependent peroxidases"/>
    <property type="match status" value="2"/>
</dbReference>
<dbReference type="PROSITE" id="PS00435">
    <property type="entry name" value="PEROXIDASE_1"/>
    <property type="match status" value="1"/>
</dbReference>
<dbReference type="PROSITE" id="PS00436">
    <property type="entry name" value="PEROXIDASE_2"/>
    <property type="match status" value="1"/>
</dbReference>
<dbReference type="PROSITE" id="PS50873">
    <property type="entry name" value="PEROXIDASE_4"/>
    <property type="match status" value="2"/>
</dbReference>
<name>KATG_MYCGI</name>
<proteinExistence type="inferred from homology"/>
<feature type="chain" id="PRO_0000354837" description="Catalase-peroxidase">
    <location>
        <begin position="1"/>
        <end position="748"/>
    </location>
</feature>
<feature type="region of interest" description="Disordered" evidence="2">
    <location>
        <begin position="1"/>
        <end position="40"/>
    </location>
</feature>
<feature type="compositionally biased region" description="Basic and acidic residues" evidence="2">
    <location>
        <begin position="1"/>
        <end position="14"/>
    </location>
</feature>
<feature type="active site" description="Proton acceptor" evidence="1">
    <location>
        <position position="113"/>
    </location>
</feature>
<feature type="binding site" description="axial binding residue" evidence="1">
    <location>
        <position position="280"/>
    </location>
    <ligand>
        <name>heme b</name>
        <dbReference type="ChEBI" id="CHEBI:60344"/>
    </ligand>
    <ligandPart>
        <name>Fe</name>
        <dbReference type="ChEBI" id="CHEBI:18248"/>
    </ligandPart>
</feature>
<feature type="site" description="Transition state stabilizer" evidence="1">
    <location>
        <position position="109"/>
    </location>
</feature>
<feature type="cross-link" description="Tryptophyl-tyrosyl-methioninium (Trp-Tyr) (with M-265)" evidence="1">
    <location>
        <begin position="112"/>
        <end position="239"/>
    </location>
</feature>
<feature type="cross-link" description="Tryptophyl-tyrosyl-methioninium (Tyr-Met) (with W-112)" evidence="1">
    <location>
        <begin position="239"/>
        <end position="265"/>
    </location>
</feature>
<protein>
    <recommendedName>
        <fullName evidence="1">Catalase-peroxidase</fullName>
        <shortName evidence="1">CP</shortName>
        <ecNumber evidence="1">1.11.1.21</ecNumber>
    </recommendedName>
    <alternativeName>
        <fullName evidence="1">Peroxidase/catalase</fullName>
    </alternativeName>
</protein>
<sequence>MTDTSDARPPHSDAKTASNSESENPAIDSPEPKSHAPLTNRDWWPEQVDVSVLHKQNEKGNPFGEDFDYAAEFAKLDVDAFKADVIDLIRTSQDWWPADYGNYAGLFVRMSWHAAGTYRIFDGRGGAGQGSQRFAPLNSWPDNANLDKARRLLWPIKQKYGNKISWADLIAYAGNAALEQSGFKTAGFAFGREDIWEPEEMLWGQEDTWLGTDKRYGGSNDDKRELAEPFGATTMGLIYVNPEGPEGKPDPLAAAHDIRETFGRMAMNDEETAALIVGGHTLGKTHGAADVNVGPEPEGAPMEQQGLGWKCPFGTGNGNDTVTSGLEVIWTGTNSQWSNAFLENLYGNEWELTKSPAGAWQFEAKNAEATIPDPFGGPPRKPTMLVTDVAMREDPIYGQITRRWLDHPEEMDAAFAKAWFKLMHRDMGPVSRYLGPWVPAEQEIWQDPVPAVDHALIDESDIAALKSQVLQSGLSVPQLVKTAWASAASFRGTDKRGGANGARLRLEPQRNWEANEPAELDKVLPVLEKIQQDFNSTATGGKKVSLADVIVLAGSAAVEKAAKDGGYEITVHFAPGRTDATQESTDVESFAVLEPRTDGFRNFFRPGDKNPLEQQLVERAYLLDLTAPELTALIGGLRALGANHGGSKHGVFTDKPGVLSNDFFLNLLDMRTEWKPSELSENVFDGKDRATGETKWTATANDLVFGSNSVLRALAEVYAQDDNQGKFVEDFVAAWVKVMNNDRFDLKQ</sequence>
<organism>
    <name type="scientific">Mycolicibacterium gilvum (strain PYR-GCK)</name>
    <name type="common">Mycobacterium gilvum (strain PYR-GCK)</name>
    <dbReference type="NCBI Taxonomy" id="350054"/>
    <lineage>
        <taxon>Bacteria</taxon>
        <taxon>Bacillati</taxon>
        <taxon>Actinomycetota</taxon>
        <taxon>Actinomycetes</taxon>
        <taxon>Mycobacteriales</taxon>
        <taxon>Mycobacteriaceae</taxon>
        <taxon>Mycolicibacterium</taxon>
    </lineage>
</organism>
<gene>
    <name evidence="1" type="primary">katG</name>
    <name type="ordered locus">Mflv_3451</name>
</gene>
<accession>A4TA35</accession>